<organismHost>
    <name type="scientific">Homo sapiens</name>
    <name type="common">Human</name>
    <dbReference type="NCBI Taxonomy" id="9606"/>
</organismHost>
<accession>P52346</accession>
<comment type="function">
    <text evidence="1">Plays a role in processing non linear or branched viral DNA intermediates in order to promote the production of mature packaged unit-length linear progeny viral DNA molecules. Exhibits endonuclease and exonuclease activities and accepts both double-stranded and single-stranded DNA as substrate. Exonuclease digestion of DNA is in the 5'-&gt; 3' direction and the products are 5'-monophosphate nucleosides. Additionally, forms a recombinase with the major DNA-binding protein, which displays strand exchange activity.</text>
</comment>
<comment type="subunit">
    <text evidence="1">Interacts with major DNA-binding protein; this interaction increases the nuclease processivity of the alkaline exonuclease.</text>
</comment>
<comment type="subcellular location">
    <subcellularLocation>
        <location evidence="1">Host nucleus</location>
    </subcellularLocation>
    <subcellularLocation>
        <location evidence="1">Host cytoplasm</location>
    </subcellularLocation>
</comment>
<comment type="similarity">
    <text evidence="1">Belongs to the herpesviridae alkaline nuclease family.</text>
</comment>
<proteinExistence type="inferred from homology"/>
<feature type="chain" id="PRO_0000115696" description="Alkaline nuclease">
    <location>
        <begin position="1"/>
        <end position="480"/>
    </location>
</feature>
<feature type="site" description="Required for function" evidence="1">
    <location>
        <position position="168"/>
    </location>
</feature>
<feature type="site" description="Required for function" evidence="1">
    <location>
        <position position="205"/>
    </location>
</feature>
<feature type="site" description="Required for function" evidence="1">
    <location>
        <position position="228"/>
    </location>
</feature>
<feature type="site" description="Required for function" evidence="1">
    <location>
        <position position="230"/>
    </location>
</feature>
<evidence type="ECO:0000255" key="1">
    <source>
        <dbReference type="HAMAP-Rule" id="MF_04009"/>
    </source>
</evidence>
<dbReference type="EC" id="3.1.-.-" evidence="1"/>
<dbReference type="EMBL" id="U43400">
    <property type="protein sequence ID" value="AAC54731.1"/>
    <property type="molecule type" value="Genomic_DNA"/>
</dbReference>
<dbReference type="PIR" id="T41971">
    <property type="entry name" value="T41971"/>
</dbReference>
<dbReference type="RefSeq" id="YP_073810.1">
    <property type="nucleotide sequence ID" value="NC_001716.2"/>
</dbReference>
<dbReference type="SMR" id="P52346"/>
<dbReference type="DNASU" id="3289528"/>
<dbReference type="GeneID" id="3289528"/>
<dbReference type="KEGG" id="vg:3289528"/>
<dbReference type="Proteomes" id="UP000009246">
    <property type="component" value="Segment"/>
</dbReference>
<dbReference type="GO" id="GO:0030430">
    <property type="term" value="C:host cell cytoplasm"/>
    <property type="evidence" value="ECO:0007669"/>
    <property type="project" value="UniProtKB-SubCell"/>
</dbReference>
<dbReference type="GO" id="GO:0042025">
    <property type="term" value="C:host cell nucleus"/>
    <property type="evidence" value="ECO:0007669"/>
    <property type="project" value="UniProtKB-SubCell"/>
</dbReference>
<dbReference type="GO" id="GO:0003677">
    <property type="term" value="F:DNA binding"/>
    <property type="evidence" value="ECO:0007669"/>
    <property type="project" value="InterPro"/>
</dbReference>
<dbReference type="GO" id="GO:0004519">
    <property type="term" value="F:endonuclease activity"/>
    <property type="evidence" value="ECO:0007669"/>
    <property type="project" value="UniProtKB-KW"/>
</dbReference>
<dbReference type="GO" id="GO:0004527">
    <property type="term" value="F:exonuclease activity"/>
    <property type="evidence" value="ECO:0007669"/>
    <property type="project" value="UniProtKB-KW"/>
</dbReference>
<dbReference type="Gene3D" id="1.20.120.860">
    <property type="entry name" value="Herpesvirus alkaline exonuclease, N-terminal domain"/>
    <property type="match status" value="1"/>
</dbReference>
<dbReference type="HAMAP" id="MF_04009">
    <property type="entry name" value="HSV_AN"/>
    <property type="match status" value="1"/>
</dbReference>
<dbReference type="InterPro" id="IPR001616">
    <property type="entry name" value="Herpes_alk_exo"/>
</dbReference>
<dbReference type="InterPro" id="IPR011335">
    <property type="entry name" value="Restrct_endonuc-II-like"/>
</dbReference>
<dbReference type="InterPro" id="IPR034720">
    <property type="entry name" value="Viral_alk_exo"/>
</dbReference>
<dbReference type="Pfam" id="PF01771">
    <property type="entry name" value="Viral_alk_exo"/>
    <property type="match status" value="1"/>
</dbReference>
<dbReference type="PRINTS" id="PR00924">
    <property type="entry name" value="ALKEXNUCLASE"/>
</dbReference>
<dbReference type="SUPFAM" id="SSF52980">
    <property type="entry name" value="Restriction endonuclease-like"/>
    <property type="match status" value="1"/>
</dbReference>
<sequence>MAIDYAQISCNLASIIEEDSVFLFLIDKLNNLDISRRKISFNFIRLCYTYYILIKFNSRFKDTFLARSFIDYMHQNISDFIDENVELSDLYSNIYVRLQDASPKVVKNLFKILERETRGQSTNPLWHAMRKNCITATKIYDIYISKSFSGIQEHSYLGDAVLYGIKHERIIEHLLKTFFVKKPWISKTLGLLLDPSSGVFGASIDSYYGISFNDNNLIEVGDKVVIFELKFRYKYLREKNDLFVSELLQNPSEIALAKFILSHPIPAIEYRENGKMPSAREYLITNNPLYDSGKKRRACLTPKNLTFDITRLIPMNEKNVSTAIIFDVVKDCILNTLVAYQKAIFTIDAFINPRHRYYFQSILQQYVMTQFYIQDHDNPENIEKENLPSVYIVSAIFRKREDDEKNCRLLIEDTEYLEEEIPLILLITPITIDAEFTSRVIKDICCIWENKIAQQTNLKIWAQSAVRQYMAASSARPKTP</sequence>
<protein>
    <recommendedName>
        <fullName evidence="1">Alkaline nuclease</fullName>
        <ecNumber evidence="1">3.1.-.-</ecNumber>
    </recommendedName>
</protein>
<organism>
    <name type="scientific">Human herpesvirus 7 (strain JI)</name>
    <name type="common">HHV-7</name>
    <name type="synonym">Human T lymphotropic virus</name>
    <dbReference type="NCBI Taxonomy" id="57278"/>
    <lineage>
        <taxon>Viruses</taxon>
        <taxon>Duplodnaviria</taxon>
        <taxon>Heunggongvirae</taxon>
        <taxon>Peploviricota</taxon>
        <taxon>Herviviricetes</taxon>
        <taxon>Herpesvirales</taxon>
        <taxon>Orthoherpesviridae</taxon>
        <taxon>Betaherpesvirinae</taxon>
        <taxon>Roseolovirus</taxon>
        <taxon>Roseolovirus humanbeta7</taxon>
        <taxon>Human betaherpesvirus 7</taxon>
    </lineage>
</organism>
<reference key="1">
    <citation type="journal article" date="1996" name="J. Virol.">
        <title>Determination and analysis of the complete nucleotide sequence of human herpesvirus.</title>
        <authorList>
            <person name="Nicholas J."/>
        </authorList>
    </citation>
    <scope>NUCLEOTIDE SEQUENCE [LARGE SCALE GENOMIC DNA]</scope>
</reference>
<keyword id="KW-0255">Endonuclease</keyword>
<keyword id="KW-0269">Exonuclease</keyword>
<keyword id="KW-1035">Host cytoplasm</keyword>
<keyword id="KW-1048">Host nucleus</keyword>
<keyword id="KW-0945">Host-virus interaction</keyword>
<keyword id="KW-0378">Hydrolase</keyword>
<keyword id="KW-0540">Nuclease</keyword>
<keyword id="KW-1185">Reference proteome</keyword>
<gene>
    <name type="primary">U70</name>
</gene>
<name>AN_HHV7J</name>